<reference key="1">
    <citation type="journal article" date="2009" name="Mol. Biol. Evol.">
        <title>Molecular evolution, functional variation, and proposed nomenclature of the gene family that includes sphingomyelinase D in sicariid spider venoms.</title>
        <authorList>
            <person name="Binford G.J."/>
            <person name="Bodner M.R."/>
            <person name="Cordes M.H."/>
            <person name="Baldwin K.L."/>
            <person name="Rynerson M.R."/>
            <person name="Burns S.N."/>
            <person name="Zobel-Thropp P.A."/>
        </authorList>
    </citation>
    <scope>NUCLEOTIDE SEQUENCE [MRNA]</scope>
    <scope>NOMENCLATURE</scope>
    <source>
        <tissue>Venom gland</tissue>
    </source>
</reference>
<dbReference type="EC" id="4.6.1.-" evidence="4"/>
<dbReference type="EMBL" id="FJ171373">
    <property type="protein sequence ID" value="ACN48869.1"/>
    <property type="molecule type" value="mRNA"/>
</dbReference>
<dbReference type="SMR" id="C0JAT8"/>
<dbReference type="GO" id="GO:0005576">
    <property type="term" value="C:extracellular region"/>
    <property type="evidence" value="ECO:0007669"/>
    <property type="project" value="UniProtKB-SubCell"/>
</dbReference>
<dbReference type="GO" id="GO:0016829">
    <property type="term" value="F:lyase activity"/>
    <property type="evidence" value="ECO:0007669"/>
    <property type="project" value="UniProtKB-KW"/>
</dbReference>
<dbReference type="GO" id="GO:0046872">
    <property type="term" value="F:metal ion binding"/>
    <property type="evidence" value="ECO:0007669"/>
    <property type="project" value="UniProtKB-KW"/>
</dbReference>
<dbReference type="GO" id="GO:0008081">
    <property type="term" value="F:phosphoric diester hydrolase activity"/>
    <property type="evidence" value="ECO:0007669"/>
    <property type="project" value="InterPro"/>
</dbReference>
<dbReference type="GO" id="GO:0090729">
    <property type="term" value="F:toxin activity"/>
    <property type="evidence" value="ECO:0007669"/>
    <property type="project" value="UniProtKB-KW"/>
</dbReference>
<dbReference type="GO" id="GO:0031640">
    <property type="term" value="P:killing of cells of another organism"/>
    <property type="evidence" value="ECO:0007669"/>
    <property type="project" value="UniProtKB-KW"/>
</dbReference>
<dbReference type="GO" id="GO:0016042">
    <property type="term" value="P:lipid catabolic process"/>
    <property type="evidence" value="ECO:0007669"/>
    <property type="project" value="UniProtKB-KW"/>
</dbReference>
<dbReference type="CDD" id="cd08576">
    <property type="entry name" value="GDPD_like_SMaseD_PLD"/>
    <property type="match status" value="1"/>
</dbReference>
<dbReference type="Gene3D" id="3.20.20.190">
    <property type="entry name" value="Phosphatidylinositol (PI) phosphodiesterase"/>
    <property type="match status" value="1"/>
</dbReference>
<dbReference type="InterPro" id="IPR017946">
    <property type="entry name" value="PLC-like_Pdiesterase_TIM-brl"/>
</dbReference>
<dbReference type="Pfam" id="PF13653">
    <property type="entry name" value="GDPD_2"/>
    <property type="match status" value="1"/>
</dbReference>
<dbReference type="SUPFAM" id="SSF51695">
    <property type="entry name" value="PLC-like phosphodiesterases"/>
    <property type="match status" value="1"/>
</dbReference>
<evidence type="ECO:0000250" key="1">
    <source>
        <dbReference type="UniProtKB" id="A0A0D4WTV1"/>
    </source>
</evidence>
<evidence type="ECO:0000250" key="2">
    <source>
        <dbReference type="UniProtKB" id="A0A0D4WV12"/>
    </source>
</evidence>
<evidence type="ECO:0000250" key="3">
    <source>
        <dbReference type="UniProtKB" id="P0CE80"/>
    </source>
</evidence>
<evidence type="ECO:0000250" key="4">
    <source>
        <dbReference type="UniProtKB" id="Q4ZFU2"/>
    </source>
</evidence>
<evidence type="ECO:0000250" key="5">
    <source>
        <dbReference type="UniProtKB" id="Q8I914"/>
    </source>
</evidence>
<evidence type="ECO:0000303" key="6">
    <source>
    </source>
</evidence>
<evidence type="ECO:0000305" key="7"/>
<evidence type="ECO:0000305" key="8">
    <source>
    </source>
</evidence>
<keyword id="KW-0204">Cytolysis</keyword>
<keyword id="KW-1061">Dermonecrotic toxin</keyword>
<keyword id="KW-1015">Disulfide bond</keyword>
<keyword id="KW-0354">Hemolysis</keyword>
<keyword id="KW-0442">Lipid degradation</keyword>
<keyword id="KW-0443">Lipid metabolism</keyword>
<keyword id="KW-0456">Lyase</keyword>
<keyword id="KW-0460">Magnesium</keyword>
<keyword id="KW-0479">Metal-binding</keyword>
<keyword id="KW-0964">Secreted</keyword>
<keyword id="KW-0800">Toxin</keyword>
<proteinExistence type="evidence at transcript level"/>
<accession>C0JAT8</accession>
<comment type="function">
    <text evidence="1 3">Dermonecrotic toxins cleave the phosphodiester linkage between the phosphate and headgroup of certain phospholipids (sphingolipid and lysolipid substrates), forming an alcohol (often choline) and a cyclic phosphate (By similarity). This toxin acts on sphingomyelin (SM) (By similarity). It may also act on ceramide phosphoethanolamine (CPE), lysophosphatidylcholine (LPC) and lysophosphatidylethanolamine (LPE), but not on lysophosphatidylserine (LPS), and lysophosphatidylglycerol (LPG) (By similarity). It acts by transphosphatidylation, releasing exclusively cyclic phosphate products as second products (By similarity). Induces dermonecrosis, hemolysis, increased vascular permeability, edema, inflammatory response, and platelet aggregation (By similarity).</text>
</comment>
<comment type="catalytic activity">
    <reaction evidence="1">
        <text>an N-(acyl)-sphingosylphosphocholine = an N-(acyl)-sphingosyl-1,3-cyclic phosphate + choline</text>
        <dbReference type="Rhea" id="RHEA:60652"/>
        <dbReference type="ChEBI" id="CHEBI:15354"/>
        <dbReference type="ChEBI" id="CHEBI:64583"/>
        <dbReference type="ChEBI" id="CHEBI:143892"/>
    </reaction>
</comment>
<comment type="catalytic activity">
    <reaction evidence="1">
        <text>an N-(acyl)-sphingosylphosphoethanolamine = an N-(acyl)-sphingosyl-1,3-cyclic phosphate + ethanolamine</text>
        <dbReference type="Rhea" id="RHEA:60648"/>
        <dbReference type="ChEBI" id="CHEBI:57603"/>
        <dbReference type="ChEBI" id="CHEBI:143891"/>
        <dbReference type="ChEBI" id="CHEBI:143892"/>
    </reaction>
</comment>
<comment type="catalytic activity">
    <reaction evidence="1">
        <text>a 1-acyl-sn-glycero-3-phosphocholine = a 1-acyl-sn-glycero-2,3-cyclic phosphate + choline</text>
        <dbReference type="Rhea" id="RHEA:60700"/>
        <dbReference type="ChEBI" id="CHEBI:15354"/>
        <dbReference type="ChEBI" id="CHEBI:58168"/>
        <dbReference type="ChEBI" id="CHEBI:143947"/>
    </reaction>
</comment>
<comment type="catalytic activity">
    <reaction evidence="1">
        <text>a 1-acyl-sn-glycero-3-phosphoethanolamine = a 1-acyl-sn-glycero-2,3-cyclic phosphate + ethanolamine</text>
        <dbReference type="Rhea" id="RHEA:60704"/>
        <dbReference type="ChEBI" id="CHEBI:57603"/>
        <dbReference type="ChEBI" id="CHEBI:64381"/>
        <dbReference type="ChEBI" id="CHEBI:143947"/>
    </reaction>
</comment>
<comment type="cofactor">
    <cofactor evidence="5">
        <name>Mg(2+)</name>
        <dbReference type="ChEBI" id="CHEBI:18420"/>
    </cofactor>
    <text evidence="5">Binds 1 Mg(2+) ion per subunit.</text>
</comment>
<comment type="subcellular location">
    <subcellularLocation>
        <location evidence="8">Secreted</location>
    </subcellularLocation>
</comment>
<comment type="tissue specificity">
    <text evidence="8">Expressed by the venom gland.</text>
</comment>
<comment type="similarity">
    <text evidence="7">Belongs to the arthropod phospholipase D family. Class II subfamily.</text>
</comment>
<comment type="caution">
    <text evidence="1 2 4">The most common activity assay for dermonecrotic toxins detects enzymatic activity by monitoring choline release from substrate. Liberation of choline from sphingomyelin (SM) or lysophosphatidylcholine (LPC) is commonly assumed to result from substrate hydrolysis, giving either ceramide-1-phosphate (C1P) or lysophosphatidic acid (LPA), respectively, as a second product. However, two studies from Lajoie and colleagues (2013 and 2015) report the observation of exclusive formation of cyclic phosphate products as second products, resulting from intramolecular transphosphatidylation. Cyclic phosphates have vastly different biological properties from their monoester counterparts, and they may be relevant to the pathology of brown spider envenomation.</text>
</comment>
<sequence length="273" mass="30412">WIMGHMVNAIGQIDEFVNLGANSIETDVSFDSSANPEYTYHGIPCECGRNCKKWENFNDFLKGLRSATTPGNSKYKEKLVLVVFDLKTGSLYDNQANDAGKKLAKNLLQHYWNNGNNGGRAYIVLSIPDLNHYPLIKGFTDTLKQEGHPELLGKLGYDFSGNDAIGDVAKAYKKAGVSGHVWQSDGITNCLLRGLTRVKEAVANRDSGNGYINKVYYWTVDKRATTRDALDAGVDGIMTNYPDVITDVLNEAAYKSKFRVATYEDNPWETFKK</sequence>
<name>A1H4_LOXHI</name>
<organism>
    <name type="scientific">Loxosceles hirsuta</name>
    <name type="common">Recluse spider</name>
    <dbReference type="NCBI Taxonomy" id="571525"/>
    <lineage>
        <taxon>Eukaryota</taxon>
        <taxon>Metazoa</taxon>
        <taxon>Ecdysozoa</taxon>
        <taxon>Arthropoda</taxon>
        <taxon>Chelicerata</taxon>
        <taxon>Arachnida</taxon>
        <taxon>Araneae</taxon>
        <taxon>Araneomorphae</taxon>
        <taxon>Haplogynae</taxon>
        <taxon>Scytodoidea</taxon>
        <taxon>Sicariidae</taxon>
        <taxon>Loxosceles</taxon>
    </lineage>
</organism>
<feature type="chain" id="PRO_0000392738" description="Dermonecrotic toxin LhSicTox-alphaIA1iv">
    <location>
        <begin position="1" status="less than"/>
        <end position="273"/>
    </location>
</feature>
<feature type="active site" evidence="5">
    <location>
        <position position="5"/>
    </location>
</feature>
<feature type="active site" description="Nucleophile" evidence="5">
    <location>
        <position position="41"/>
    </location>
</feature>
<feature type="binding site" evidence="5">
    <location>
        <position position="25"/>
    </location>
    <ligand>
        <name>Mg(2+)</name>
        <dbReference type="ChEBI" id="CHEBI:18420"/>
    </ligand>
</feature>
<feature type="binding site" evidence="5">
    <location>
        <position position="27"/>
    </location>
    <ligand>
        <name>Mg(2+)</name>
        <dbReference type="ChEBI" id="CHEBI:18420"/>
    </ligand>
</feature>
<feature type="binding site" evidence="5">
    <location>
        <position position="85"/>
    </location>
    <ligand>
        <name>Mg(2+)</name>
        <dbReference type="ChEBI" id="CHEBI:18420"/>
    </ligand>
</feature>
<feature type="disulfide bond" evidence="3">
    <location>
        <begin position="45"/>
        <end position="51"/>
    </location>
</feature>
<feature type="disulfide bond" evidence="3">
    <location>
        <begin position="47"/>
        <end position="190"/>
    </location>
</feature>
<feature type="non-terminal residue">
    <location>
        <position position="1"/>
    </location>
</feature>
<protein>
    <recommendedName>
        <fullName evidence="6">Dermonecrotic toxin LhSicTox-alphaIA1iv</fullName>
        <ecNumber evidence="4">4.6.1.-</ecNumber>
    </recommendedName>
    <alternativeName>
        <fullName>Phospholipase D</fullName>
        <shortName>PLD</shortName>
    </alternativeName>
    <alternativeName>
        <fullName>Sphingomyelin phosphodiesterase D</fullName>
        <shortName>SMD</shortName>
        <shortName>SMase D</shortName>
        <shortName>Sphingomyelinase D</shortName>
    </alternativeName>
</protein>